<feature type="chain" id="PRO_1000126788" description="Large ribosomal subunit protein bL31B">
    <location>
        <begin position="1"/>
        <end position="87"/>
    </location>
</feature>
<proteinExistence type="inferred from homology"/>
<accession>B1YRF5</accession>
<evidence type="ECO:0000255" key="1">
    <source>
        <dbReference type="HAMAP-Rule" id="MF_00502"/>
    </source>
</evidence>
<evidence type="ECO:0000305" key="2"/>
<comment type="subunit">
    <text evidence="1">Part of the 50S ribosomal subunit.</text>
</comment>
<comment type="similarity">
    <text evidence="1">Belongs to the bacterial ribosomal protein bL31 family. Type B subfamily.</text>
</comment>
<keyword id="KW-0687">Ribonucleoprotein</keyword>
<keyword id="KW-0689">Ribosomal protein</keyword>
<gene>
    <name evidence="1" type="primary">rpmE2</name>
    <name type="ordered locus">BamMC406_1744</name>
</gene>
<sequence>MKEGIHPNYREVVFQDMSNGFKFITRSTIQTRENIELDGKTYPLAKIEVSSESHSFYTGQQKIMDTAGRVEKFKNKFGARASGKLAK</sequence>
<dbReference type="EMBL" id="CP001025">
    <property type="protein sequence ID" value="ACB64229.1"/>
    <property type="molecule type" value="Genomic_DNA"/>
</dbReference>
<dbReference type="RefSeq" id="WP_006761151.1">
    <property type="nucleotide sequence ID" value="NC_010551.1"/>
</dbReference>
<dbReference type="SMR" id="B1YRF5"/>
<dbReference type="KEGG" id="bac:BamMC406_1744"/>
<dbReference type="HOGENOM" id="CLU_114306_2_1_4"/>
<dbReference type="OrthoDB" id="9803251at2"/>
<dbReference type="Proteomes" id="UP000001680">
    <property type="component" value="Chromosome 1"/>
</dbReference>
<dbReference type="GO" id="GO:1990904">
    <property type="term" value="C:ribonucleoprotein complex"/>
    <property type="evidence" value="ECO:0007669"/>
    <property type="project" value="UniProtKB-KW"/>
</dbReference>
<dbReference type="GO" id="GO:0005840">
    <property type="term" value="C:ribosome"/>
    <property type="evidence" value="ECO:0007669"/>
    <property type="project" value="UniProtKB-KW"/>
</dbReference>
<dbReference type="GO" id="GO:0003735">
    <property type="term" value="F:structural constituent of ribosome"/>
    <property type="evidence" value="ECO:0007669"/>
    <property type="project" value="InterPro"/>
</dbReference>
<dbReference type="GO" id="GO:0006412">
    <property type="term" value="P:translation"/>
    <property type="evidence" value="ECO:0007669"/>
    <property type="project" value="UniProtKB-UniRule"/>
</dbReference>
<dbReference type="Gene3D" id="4.10.830.30">
    <property type="entry name" value="Ribosomal protein L31"/>
    <property type="match status" value="1"/>
</dbReference>
<dbReference type="HAMAP" id="MF_00502">
    <property type="entry name" value="Ribosomal_bL31_2"/>
    <property type="match status" value="1"/>
</dbReference>
<dbReference type="InterPro" id="IPR034704">
    <property type="entry name" value="Ribosomal_bL28/bL31-like_sf"/>
</dbReference>
<dbReference type="InterPro" id="IPR002150">
    <property type="entry name" value="Ribosomal_bL31"/>
</dbReference>
<dbReference type="InterPro" id="IPR027493">
    <property type="entry name" value="Ribosomal_bL31_B"/>
</dbReference>
<dbReference type="InterPro" id="IPR042105">
    <property type="entry name" value="Ribosomal_bL31_sf"/>
</dbReference>
<dbReference type="NCBIfam" id="TIGR00105">
    <property type="entry name" value="L31"/>
    <property type="match status" value="1"/>
</dbReference>
<dbReference type="NCBIfam" id="NF002462">
    <property type="entry name" value="PRK01678.1"/>
    <property type="match status" value="1"/>
</dbReference>
<dbReference type="PANTHER" id="PTHR33280">
    <property type="entry name" value="50S RIBOSOMAL PROTEIN L31, CHLOROPLASTIC"/>
    <property type="match status" value="1"/>
</dbReference>
<dbReference type="PANTHER" id="PTHR33280:SF1">
    <property type="entry name" value="LARGE RIBOSOMAL SUBUNIT PROTEIN BL31C"/>
    <property type="match status" value="1"/>
</dbReference>
<dbReference type="Pfam" id="PF01197">
    <property type="entry name" value="Ribosomal_L31"/>
    <property type="match status" value="1"/>
</dbReference>
<dbReference type="PRINTS" id="PR01249">
    <property type="entry name" value="RIBOSOMALL31"/>
</dbReference>
<dbReference type="SUPFAM" id="SSF143800">
    <property type="entry name" value="L28p-like"/>
    <property type="match status" value="1"/>
</dbReference>
<name>RL31B_BURA4</name>
<organism>
    <name type="scientific">Burkholderia ambifaria (strain MC40-6)</name>
    <dbReference type="NCBI Taxonomy" id="398577"/>
    <lineage>
        <taxon>Bacteria</taxon>
        <taxon>Pseudomonadati</taxon>
        <taxon>Pseudomonadota</taxon>
        <taxon>Betaproteobacteria</taxon>
        <taxon>Burkholderiales</taxon>
        <taxon>Burkholderiaceae</taxon>
        <taxon>Burkholderia</taxon>
        <taxon>Burkholderia cepacia complex</taxon>
    </lineage>
</organism>
<protein>
    <recommendedName>
        <fullName evidence="1">Large ribosomal subunit protein bL31B</fullName>
    </recommendedName>
    <alternativeName>
        <fullName evidence="2">50S ribosomal protein L31 type B</fullName>
    </alternativeName>
</protein>
<reference key="1">
    <citation type="submission" date="2008-04" db="EMBL/GenBank/DDBJ databases">
        <title>Complete sequence of chromosome 1 of Burkholderia ambifaria MC40-6.</title>
        <authorList>
            <person name="Copeland A."/>
            <person name="Lucas S."/>
            <person name="Lapidus A."/>
            <person name="Glavina del Rio T."/>
            <person name="Dalin E."/>
            <person name="Tice H."/>
            <person name="Pitluck S."/>
            <person name="Chain P."/>
            <person name="Malfatti S."/>
            <person name="Shin M."/>
            <person name="Vergez L."/>
            <person name="Lang D."/>
            <person name="Schmutz J."/>
            <person name="Larimer F."/>
            <person name="Land M."/>
            <person name="Hauser L."/>
            <person name="Kyrpides N."/>
            <person name="Lykidis A."/>
            <person name="Ramette A."/>
            <person name="Konstantinidis K."/>
            <person name="Tiedje J."/>
            <person name="Richardson P."/>
        </authorList>
    </citation>
    <scope>NUCLEOTIDE SEQUENCE [LARGE SCALE GENOMIC DNA]</scope>
    <source>
        <strain>MC40-6</strain>
    </source>
</reference>